<protein>
    <recommendedName>
        <fullName evidence="1">Signal recognition particle protein</fullName>
        <ecNumber evidence="1">3.6.5.4</ecNumber>
    </recommendedName>
    <alternativeName>
        <fullName evidence="1">Fifty-four homolog</fullName>
    </alternativeName>
</protein>
<keyword id="KW-0963">Cytoplasm</keyword>
<keyword id="KW-0342">GTP-binding</keyword>
<keyword id="KW-0378">Hydrolase</keyword>
<keyword id="KW-0547">Nucleotide-binding</keyword>
<keyword id="KW-1185">Reference proteome</keyword>
<keyword id="KW-0687">Ribonucleoprotein</keyword>
<keyword id="KW-0694">RNA-binding</keyword>
<keyword id="KW-0733">Signal recognition particle</keyword>
<name>SRP54_MYCBO</name>
<gene>
    <name evidence="1" type="primary">ffh</name>
    <name type="ordered locus">BQ2027_MB2940C</name>
</gene>
<proteinExistence type="inferred from homology"/>
<comment type="function">
    <text evidence="1">Involved in targeting and insertion of nascent membrane proteins into the cytoplasmic membrane. Binds to the hydrophobic signal sequence of the ribosome-nascent chain (RNC) as it emerges from the ribosomes. The SRP-RNC complex is then targeted to the cytoplasmic membrane where it interacts with the SRP receptor FtsY.</text>
</comment>
<comment type="catalytic activity">
    <reaction evidence="1">
        <text>GTP + H2O = GDP + phosphate + H(+)</text>
        <dbReference type="Rhea" id="RHEA:19669"/>
        <dbReference type="ChEBI" id="CHEBI:15377"/>
        <dbReference type="ChEBI" id="CHEBI:15378"/>
        <dbReference type="ChEBI" id="CHEBI:37565"/>
        <dbReference type="ChEBI" id="CHEBI:43474"/>
        <dbReference type="ChEBI" id="CHEBI:58189"/>
        <dbReference type="EC" id="3.6.5.4"/>
    </reaction>
</comment>
<comment type="subunit">
    <text evidence="1">Part of the signal recognition particle protein translocation system, which is composed of SRP and FtsY.</text>
</comment>
<comment type="subcellular location">
    <subcellularLocation>
        <location evidence="1">Cytoplasm</location>
    </subcellularLocation>
    <text evidence="1">The SRP-RNC complex is targeted to the cytoplasmic membrane.</text>
</comment>
<comment type="domain">
    <text evidence="1">Composed of three domains: the N-terminal N domain, which is responsible for interactions with the ribosome, the central G domain, which binds GTP, and the C-terminal M domain, which binds the RNA and the signal sequence of the RNC.</text>
</comment>
<comment type="similarity">
    <text evidence="1">Belongs to the GTP-binding SRP family. SRP54 subfamily.</text>
</comment>
<dbReference type="EC" id="3.6.5.4" evidence="1"/>
<dbReference type="EMBL" id="LT708304">
    <property type="protein sequence ID" value="SIU01561.1"/>
    <property type="molecule type" value="Genomic_DNA"/>
</dbReference>
<dbReference type="RefSeq" id="NP_856585.1">
    <property type="nucleotide sequence ID" value="NC_002945.3"/>
</dbReference>
<dbReference type="RefSeq" id="WP_003414748.1">
    <property type="nucleotide sequence ID" value="NC_002945.4"/>
</dbReference>
<dbReference type="SMR" id="P66845"/>
<dbReference type="GeneID" id="45426903"/>
<dbReference type="KEGG" id="mbo:BQ2027_MB2940C"/>
<dbReference type="PATRIC" id="fig|233413.5.peg.3226"/>
<dbReference type="Proteomes" id="UP000001419">
    <property type="component" value="Chromosome"/>
</dbReference>
<dbReference type="GO" id="GO:0048500">
    <property type="term" value="C:signal recognition particle"/>
    <property type="evidence" value="ECO:0007669"/>
    <property type="project" value="UniProtKB-UniRule"/>
</dbReference>
<dbReference type="GO" id="GO:0008312">
    <property type="term" value="F:7S RNA binding"/>
    <property type="evidence" value="ECO:0007669"/>
    <property type="project" value="InterPro"/>
</dbReference>
<dbReference type="GO" id="GO:0016887">
    <property type="term" value="F:ATP hydrolysis activity"/>
    <property type="evidence" value="ECO:0007669"/>
    <property type="project" value="InterPro"/>
</dbReference>
<dbReference type="GO" id="GO:0005525">
    <property type="term" value="F:GTP binding"/>
    <property type="evidence" value="ECO:0007669"/>
    <property type="project" value="UniProtKB-UniRule"/>
</dbReference>
<dbReference type="GO" id="GO:0003924">
    <property type="term" value="F:GTPase activity"/>
    <property type="evidence" value="ECO:0007669"/>
    <property type="project" value="UniProtKB-UniRule"/>
</dbReference>
<dbReference type="GO" id="GO:0006614">
    <property type="term" value="P:SRP-dependent cotranslational protein targeting to membrane"/>
    <property type="evidence" value="ECO:0007669"/>
    <property type="project" value="InterPro"/>
</dbReference>
<dbReference type="CDD" id="cd18539">
    <property type="entry name" value="SRP_G"/>
    <property type="match status" value="1"/>
</dbReference>
<dbReference type="FunFam" id="3.40.50.300:FF:000022">
    <property type="entry name" value="Signal recognition particle 54 kDa subunit"/>
    <property type="match status" value="1"/>
</dbReference>
<dbReference type="Gene3D" id="3.40.50.300">
    <property type="entry name" value="P-loop containing nucleotide triphosphate hydrolases"/>
    <property type="match status" value="1"/>
</dbReference>
<dbReference type="Gene3D" id="1.20.120.140">
    <property type="entry name" value="Signal recognition particle SRP54, nucleotide-binding domain"/>
    <property type="match status" value="1"/>
</dbReference>
<dbReference type="Gene3D" id="1.10.260.30">
    <property type="entry name" value="Signal recognition particle, SRP54 subunit, M-domain"/>
    <property type="match status" value="1"/>
</dbReference>
<dbReference type="HAMAP" id="MF_00306">
    <property type="entry name" value="SRP54"/>
    <property type="match status" value="1"/>
</dbReference>
<dbReference type="InterPro" id="IPR003593">
    <property type="entry name" value="AAA+_ATPase"/>
</dbReference>
<dbReference type="InterPro" id="IPR027417">
    <property type="entry name" value="P-loop_NTPase"/>
</dbReference>
<dbReference type="InterPro" id="IPR036891">
    <property type="entry name" value="Signal_recog_part_SRP54_M_sf"/>
</dbReference>
<dbReference type="InterPro" id="IPR013822">
    <property type="entry name" value="Signal_recog_particl_SRP54_hlx"/>
</dbReference>
<dbReference type="InterPro" id="IPR004125">
    <property type="entry name" value="Signal_recog_particle_SRP54_M"/>
</dbReference>
<dbReference type="InterPro" id="IPR004780">
    <property type="entry name" value="SRP"/>
</dbReference>
<dbReference type="InterPro" id="IPR022941">
    <property type="entry name" value="SRP54"/>
</dbReference>
<dbReference type="InterPro" id="IPR000897">
    <property type="entry name" value="SRP54_GTPase_dom"/>
</dbReference>
<dbReference type="InterPro" id="IPR042101">
    <property type="entry name" value="SRP54_N_sf"/>
</dbReference>
<dbReference type="NCBIfam" id="TIGR00959">
    <property type="entry name" value="ffh"/>
    <property type="match status" value="1"/>
</dbReference>
<dbReference type="PANTHER" id="PTHR11564">
    <property type="entry name" value="SIGNAL RECOGNITION PARTICLE 54K PROTEIN SRP54"/>
    <property type="match status" value="1"/>
</dbReference>
<dbReference type="PANTHER" id="PTHR11564:SF5">
    <property type="entry name" value="SIGNAL RECOGNITION PARTICLE SUBUNIT SRP54"/>
    <property type="match status" value="1"/>
</dbReference>
<dbReference type="Pfam" id="PF00448">
    <property type="entry name" value="SRP54"/>
    <property type="match status" value="1"/>
</dbReference>
<dbReference type="Pfam" id="PF02881">
    <property type="entry name" value="SRP54_N"/>
    <property type="match status" value="1"/>
</dbReference>
<dbReference type="Pfam" id="PF02978">
    <property type="entry name" value="SRP_SPB"/>
    <property type="match status" value="1"/>
</dbReference>
<dbReference type="SMART" id="SM00382">
    <property type="entry name" value="AAA"/>
    <property type="match status" value="1"/>
</dbReference>
<dbReference type="SMART" id="SM00962">
    <property type="entry name" value="SRP54"/>
    <property type="match status" value="1"/>
</dbReference>
<dbReference type="SMART" id="SM00963">
    <property type="entry name" value="SRP54_N"/>
    <property type="match status" value="1"/>
</dbReference>
<dbReference type="SUPFAM" id="SSF52540">
    <property type="entry name" value="P-loop containing nucleoside triphosphate hydrolases"/>
    <property type="match status" value="1"/>
</dbReference>
<dbReference type="SUPFAM" id="SSF47446">
    <property type="entry name" value="Signal peptide-binding domain"/>
    <property type="match status" value="1"/>
</dbReference>
<dbReference type="PROSITE" id="PS00300">
    <property type="entry name" value="SRP54"/>
    <property type="match status" value="1"/>
</dbReference>
<organism>
    <name type="scientific">Mycobacterium bovis (strain ATCC BAA-935 / AF2122/97)</name>
    <dbReference type="NCBI Taxonomy" id="233413"/>
    <lineage>
        <taxon>Bacteria</taxon>
        <taxon>Bacillati</taxon>
        <taxon>Actinomycetota</taxon>
        <taxon>Actinomycetes</taxon>
        <taxon>Mycobacteriales</taxon>
        <taxon>Mycobacteriaceae</taxon>
        <taxon>Mycobacterium</taxon>
        <taxon>Mycobacterium tuberculosis complex</taxon>
    </lineage>
</organism>
<evidence type="ECO:0000255" key="1">
    <source>
        <dbReference type="HAMAP-Rule" id="MF_00306"/>
    </source>
</evidence>
<evidence type="ECO:0000256" key="2">
    <source>
        <dbReference type="SAM" id="MobiDB-lite"/>
    </source>
</evidence>
<sequence length="525" mass="55002">MFESLSDRLTAALQGLRGKGRLTDADIDATTREIRLALLEADVSLPVVRAFIHRIKERARGAEVSSALNPAQQVVKIVNEELISILGGETRELAFAKTPPTVVMLAGLQGSGKTTLAGKLAARLRGQGHTPLLVACDLQRPAAVNQLQVVGERAGVPVFAPHPGASPESGPGDPVAVAAAGLAEARAKHFDVVIVDTAGRLGIDEELMAQAAAIRDAINPDEVLFVLDAMIGQDAVTTAAAFGEGVGFTGVALTKLDGDARGGAALSVREVTGVPILFASTGEKLEDFDVFHPDRMASRILGMGDVLSLIEQAEQVFDAQQAEEAAAKIGAGELTLEDFLEQMLAVRKMGPIGNLLGMLPGAAQMKDALAEVDDKQLDRVQAIIRGMTPQERADPKIINASRRLRIANGSGVTVSEVNQLVERFFEARKMMSSMLGGMGIPGIGRKSATRKSKGAKGKSGKKSKKGTRGPTPPKVKSPFGVPGMPGLAGLPGGLPDLSQMPKGLDELPPGLADFDLSKLKFPGKK</sequence>
<reference key="1">
    <citation type="journal article" date="2003" name="Proc. Natl. Acad. Sci. U.S.A.">
        <title>The complete genome sequence of Mycobacterium bovis.</title>
        <authorList>
            <person name="Garnier T."/>
            <person name="Eiglmeier K."/>
            <person name="Camus J.-C."/>
            <person name="Medina N."/>
            <person name="Mansoor H."/>
            <person name="Pryor M."/>
            <person name="Duthoy S."/>
            <person name="Grondin S."/>
            <person name="Lacroix C."/>
            <person name="Monsempe C."/>
            <person name="Simon S."/>
            <person name="Harris B."/>
            <person name="Atkin R."/>
            <person name="Doggett J."/>
            <person name="Mayes R."/>
            <person name="Keating L."/>
            <person name="Wheeler P.R."/>
            <person name="Parkhill J."/>
            <person name="Barrell B.G."/>
            <person name="Cole S.T."/>
            <person name="Gordon S.V."/>
            <person name="Hewinson R.G."/>
        </authorList>
    </citation>
    <scope>NUCLEOTIDE SEQUENCE [LARGE SCALE GENOMIC DNA]</scope>
    <source>
        <strain>ATCC BAA-935 / AF2122/97</strain>
    </source>
</reference>
<reference key="2">
    <citation type="journal article" date="2017" name="Genome Announc.">
        <title>Updated reference genome sequence and annotation of Mycobacterium bovis AF2122/97.</title>
        <authorList>
            <person name="Malone K.M."/>
            <person name="Farrell D."/>
            <person name="Stuber T.P."/>
            <person name="Schubert O.T."/>
            <person name="Aebersold R."/>
            <person name="Robbe-Austerman S."/>
            <person name="Gordon S.V."/>
        </authorList>
    </citation>
    <scope>NUCLEOTIDE SEQUENCE [LARGE SCALE GENOMIC DNA]</scope>
    <scope>GENOME REANNOTATION</scope>
    <source>
        <strain>ATCC BAA-935 / AF2122/97</strain>
    </source>
</reference>
<accession>P66845</accession>
<accession>A0A1R3Y2K7</accession>
<accession>Q10963</accession>
<accession>X2BLW0</accession>
<feature type="chain" id="PRO_0000101164" description="Signal recognition particle protein">
    <location>
        <begin position="1"/>
        <end position="525"/>
    </location>
</feature>
<feature type="region of interest" description="Disordered" evidence="2">
    <location>
        <begin position="437"/>
        <end position="525"/>
    </location>
</feature>
<feature type="compositionally biased region" description="Basic residues" evidence="2">
    <location>
        <begin position="447"/>
        <end position="467"/>
    </location>
</feature>
<feature type="compositionally biased region" description="Low complexity" evidence="2">
    <location>
        <begin position="480"/>
        <end position="497"/>
    </location>
</feature>
<feature type="binding site" evidence="1">
    <location>
        <begin position="107"/>
        <end position="114"/>
    </location>
    <ligand>
        <name>GTP</name>
        <dbReference type="ChEBI" id="CHEBI:37565"/>
    </ligand>
</feature>
<feature type="binding site" evidence="1">
    <location>
        <begin position="196"/>
        <end position="200"/>
    </location>
    <ligand>
        <name>GTP</name>
        <dbReference type="ChEBI" id="CHEBI:37565"/>
    </ligand>
</feature>
<feature type="binding site" evidence="1">
    <location>
        <begin position="254"/>
        <end position="257"/>
    </location>
    <ligand>
        <name>GTP</name>
        <dbReference type="ChEBI" id="CHEBI:37565"/>
    </ligand>
</feature>